<dbReference type="EC" id="2.7.7.3" evidence="1"/>
<dbReference type="EMBL" id="CP000509">
    <property type="protein sequence ID" value="ABL82785.1"/>
    <property type="molecule type" value="Genomic_DNA"/>
</dbReference>
<dbReference type="RefSeq" id="WP_011756719.1">
    <property type="nucleotide sequence ID" value="NC_008699.1"/>
</dbReference>
<dbReference type="SMR" id="A1SLV0"/>
<dbReference type="STRING" id="196162.Noca_3283"/>
<dbReference type="KEGG" id="nca:Noca_3283"/>
<dbReference type="eggNOG" id="COG0669">
    <property type="taxonomic scope" value="Bacteria"/>
</dbReference>
<dbReference type="HOGENOM" id="CLU_100149_1_0_11"/>
<dbReference type="OrthoDB" id="9806661at2"/>
<dbReference type="UniPathway" id="UPA00241">
    <property type="reaction ID" value="UER00355"/>
</dbReference>
<dbReference type="Proteomes" id="UP000000640">
    <property type="component" value="Chromosome"/>
</dbReference>
<dbReference type="GO" id="GO:0005737">
    <property type="term" value="C:cytoplasm"/>
    <property type="evidence" value="ECO:0007669"/>
    <property type="project" value="UniProtKB-SubCell"/>
</dbReference>
<dbReference type="GO" id="GO:0005524">
    <property type="term" value="F:ATP binding"/>
    <property type="evidence" value="ECO:0007669"/>
    <property type="project" value="UniProtKB-KW"/>
</dbReference>
<dbReference type="GO" id="GO:0004595">
    <property type="term" value="F:pantetheine-phosphate adenylyltransferase activity"/>
    <property type="evidence" value="ECO:0007669"/>
    <property type="project" value="UniProtKB-UniRule"/>
</dbReference>
<dbReference type="GO" id="GO:0015937">
    <property type="term" value="P:coenzyme A biosynthetic process"/>
    <property type="evidence" value="ECO:0007669"/>
    <property type="project" value="UniProtKB-UniRule"/>
</dbReference>
<dbReference type="CDD" id="cd02163">
    <property type="entry name" value="PPAT"/>
    <property type="match status" value="1"/>
</dbReference>
<dbReference type="Gene3D" id="3.40.50.620">
    <property type="entry name" value="HUPs"/>
    <property type="match status" value="1"/>
</dbReference>
<dbReference type="HAMAP" id="MF_00151">
    <property type="entry name" value="PPAT_bact"/>
    <property type="match status" value="1"/>
</dbReference>
<dbReference type="InterPro" id="IPR004821">
    <property type="entry name" value="Cyt_trans-like"/>
</dbReference>
<dbReference type="InterPro" id="IPR001980">
    <property type="entry name" value="PPAT"/>
</dbReference>
<dbReference type="InterPro" id="IPR014729">
    <property type="entry name" value="Rossmann-like_a/b/a_fold"/>
</dbReference>
<dbReference type="NCBIfam" id="TIGR01510">
    <property type="entry name" value="coaD_prev_kdtB"/>
    <property type="match status" value="1"/>
</dbReference>
<dbReference type="NCBIfam" id="TIGR00125">
    <property type="entry name" value="cyt_tran_rel"/>
    <property type="match status" value="1"/>
</dbReference>
<dbReference type="PANTHER" id="PTHR21342">
    <property type="entry name" value="PHOSPHOPANTETHEINE ADENYLYLTRANSFERASE"/>
    <property type="match status" value="1"/>
</dbReference>
<dbReference type="PANTHER" id="PTHR21342:SF1">
    <property type="entry name" value="PHOSPHOPANTETHEINE ADENYLYLTRANSFERASE"/>
    <property type="match status" value="1"/>
</dbReference>
<dbReference type="Pfam" id="PF01467">
    <property type="entry name" value="CTP_transf_like"/>
    <property type="match status" value="1"/>
</dbReference>
<dbReference type="PRINTS" id="PR01020">
    <property type="entry name" value="LPSBIOSNTHSS"/>
</dbReference>
<dbReference type="SUPFAM" id="SSF52374">
    <property type="entry name" value="Nucleotidylyl transferase"/>
    <property type="match status" value="1"/>
</dbReference>
<keyword id="KW-0067">ATP-binding</keyword>
<keyword id="KW-0173">Coenzyme A biosynthesis</keyword>
<keyword id="KW-0963">Cytoplasm</keyword>
<keyword id="KW-0460">Magnesium</keyword>
<keyword id="KW-0547">Nucleotide-binding</keyword>
<keyword id="KW-0548">Nucleotidyltransferase</keyword>
<keyword id="KW-1185">Reference proteome</keyword>
<keyword id="KW-0808">Transferase</keyword>
<organism>
    <name type="scientific">Nocardioides sp. (strain ATCC BAA-499 / JS614)</name>
    <dbReference type="NCBI Taxonomy" id="196162"/>
    <lineage>
        <taxon>Bacteria</taxon>
        <taxon>Bacillati</taxon>
        <taxon>Actinomycetota</taxon>
        <taxon>Actinomycetes</taxon>
        <taxon>Propionibacteriales</taxon>
        <taxon>Nocardioidaceae</taxon>
        <taxon>Nocardioides</taxon>
    </lineage>
</organism>
<accession>A1SLV0</accession>
<proteinExistence type="inferred from homology"/>
<sequence length="159" mass="17046">MTRAVCPGSFDPVTNGHLDIVRRAAAIFDELVVATGTNVSKSRLFDPEERLEMLREVCADLPNVTVMGFTGLIVDFCRDIDAQAIVKGLRGGNDYEYELPMAQMNAHLTGVETVFLTTHASWGYVSSSLVKEVASLGGDVSALVPPAVHGRLQARLAAG</sequence>
<evidence type="ECO:0000255" key="1">
    <source>
        <dbReference type="HAMAP-Rule" id="MF_00151"/>
    </source>
</evidence>
<reference key="1">
    <citation type="submission" date="2006-12" db="EMBL/GenBank/DDBJ databases">
        <title>Complete sequence of chromosome 1 of Nocardioides sp. JS614.</title>
        <authorList>
            <person name="Copeland A."/>
            <person name="Lucas S."/>
            <person name="Lapidus A."/>
            <person name="Barry K."/>
            <person name="Detter J.C."/>
            <person name="Glavina del Rio T."/>
            <person name="Hammon N."/>
            <person name="Israni S."/>
            <person name="Dalin E."/>
            <person name="Tice H."/>
            <person name="Pitluck S."/>
            <person name="Thompson L.S."/>
            <person name="Brettin T."/>
            <person name="Bruce D."/>
            <person name="Han C."/>
            <person name="Tapia R."/>
            <person name="Schmutz J."/>
            <person name="Larimer F."/>
            <person name="Land M."/>
            <person name="Hauser L."/>
            <person name="Kyrpides N."/>
            <person name="Kim E."/>
            <person name="Mattes T."/>
            <person name="Gossett J."/>
            <person name="Richardson P."/>
        </authorList>
    </citation>
    <scope>NUCLEOTIDE SEQUENCE [LARGE SCALE GENOMIC DNA]</scope>
    <source>
        <strain>ATCC BAA-499 / JS614</strain>
    </source>
</reference>
<protein>
    <recommendedName>
        <fullName evidence="1">Phosphopantetheine adenylyltransferase</fullName>
        <ecNumber evidence="1">2.7.7.3</ecNumber>
    </recommendedName>
    <alternativeName>
        <fullName evidence="1">Dephospho-CoA pyrophosphorylase</fullName>
    </alternativeName>
    <alternativeName>
        <fullName evidence="1">Pantetheine-phosphate adenylyltransferase</fullName>
        <shortName evidence="1">PPAT</shortName>
    </alternativeName>
</protein>
<feature type="chain" id="PRO_1000011191" description="Phosphopantetheine adenylyltransferase">
    <location>
        <begin position="1"/>
        <end position="159"/>
    </location>
</feature>
<feature type="binding site" evidence="1">
    <location>
        <begin position="9"/>
        <end position="10"/>
    </location>
    <ligand>
        <name>ATP</name>
        <dbReference type="ChEBI" id="CHEBI:30616"/>
    </ligand>
</feature>
<feature type="binding site" evidence="1">
    <location>
        <position position="9"/>
    </location>
    <ligand>
        <name>substrate</name>
    </ligand>
</feature>
<feature type="binding site" evidence="1">
    <location>
        <position position="17"/>
    </location>
    <ligand>
        <name>ATP</name>
        <dbReference type="ChEBI" id="CHEBI:30616"/>
    </ligand>
</feature>
<feature type="binding site" evidence="1">
    <location>
        <position position="41"/>
    </location>
    <ligand>
        <name>substrate</name>
    </ligand>
</feature>
<feature type="binding site" evidence="1">
    <location>
        <position position="73"/>
    </location>
    <ligand>
        <name>substrate</name>
    </ligand>
</feature>
<feature type="binding site" evidence="1">
    <location>
        <position position="87"/>
    </location>
    <ligand>
        <name>substrate</name>
    </ligand>
</feature>
<feature type="binding site" evidence="1">
    <location>
        <begin position="88"/>
        <end position="90"/>
    </location>
    <ligand>
        <name>ATP</name>
        <dbReference type="ChEBI" id="CHEBI:30616"/>
    </ligand>
</feature>
<feature type="binding site" evidence="1">
    <location>
        <position position="98"/>
    </location>
    <ligand>
        <name>ATP</name>
        <dbReference type="ChEBI" id="CHEBI:30616"/>
    </ligand>
</feature>
<feature type="binding site" evidence="1">
    <location>
        <begin position="122"/>
        <end position="128"/>
    </location>
    <ligand>
        <name>ATP</name>
        <dbReference type="ChEBI" id="CHEBI:30616"/>
    </ligand>
</feature>
<feature type="site" description="Transition state stabilizer" evidence="1">
    <location>
        <position position="17"/>
    </location>
</feature>
<comment type="function">
    <text evidence="1">Reversibly transfers an adenylyl group from ATP to 4'-phosphopantetheine, yielding dephospho-CoA (dPCoA) and pyrophosphate.</text>
</comment>
<comment type="catalytic activity">
    <reaction evidence="1">
        <text>(R)-4'-phosphopantetheine + ATP + H(+) = 3'-dephospho-CoA + diphosphate</text>
        <dbReference type="Rhea" id="RHEA:19801"/>
        <dbReference type="ChEBI" id="CHEBI:15378"/>
        <dbReference type="ChEBI" id="CHEBI:30616"/>
        <dbReference type="ChEBI" id="CHEBI:33019"/>
        <dbReference type="ChEBI" id="CHEBI:57328"/>
        <dbReference type="ChEBI" id="CHEBI:61723"/>
        <dbReference type="EC" id="2.7.7.3"/>
    </reaction>
</comment>
<comment type="cofactor">
    <cofactor evidence="1">
        <name>Mg(2+)</name>
        <dbReference type="ChEBI" id="CHEBI:18420"/>
    </cofactor>
</comment>
<comment type="pathway">
    <text evidence="1">Cofactor biosynthesis; coenzyme A biosynthesis; CoA from (R)-pantothenate: step 4/5.</text>
</comment>
<comment type="subunit">
    <text evidence="1">Homohexamer.</text>
</comment>
<comment type="subcellular location">
    <subcellularLocation>
        <location evidence="1">Cytoplasm</location>
    </subcellularLocation>
</comment>
<comment type="similarity">
    <text evidence="1">Belongs to the bacterial CoaD family.</text>
</comment>
<gene>
    <name evidence="1" type="primary">coaD</name>
    <name type="ordered locus">Noca_3283</name>
</gene>
<name>COAD_NOCSJ</name>